<proteinExistence type="evidence at protein level"/>
<protein>
    <recommendedName>
        <fullName>Pleckstrin homology domain-containing family F member 1</fullName>
        <shortName>PH domain-containing family F member 1</shortName>
    </recommendedName>
    <alternativeName>
        <fullName>Lysosome-associated apoptosis-inducing protein containing PH and FYVE domains</fullName>
        <shortName>Apoptosis-inducing protein</shortName>
    </alternativeName>
    <alternativeName>
        <fullName>PH and FYVE domain-containing protein 1</fullName>
    </alternativeName>
    <alternativeName>
        <fullName>Phafin-1</fullName>
    </alternativeName>
    <alternativeName>
        <fullName>Zinc finger FYVE domain-containing protein 15</fullName>
    </alternativeName>
</protein>
<organism>
    <name type="scientific">Homo sapiens</name>
    <name type="common">Human</name>
    <dbReference type="NCBI Taxonomy" id="9606"/>
    <lineage>
        <taxon>Eukaryota</taxon>
        <taxon>Metazoa</taxon>
        <taxon>Chordata</taxon>
        <taxon>Craniata</taxon>
        <taxon>Vertebrata</taxon>
        <taxon>Euteleostomi</taxon>
        <taxon>Mammalia</taxon>
        <taxon>Eutheria</taxon>
        <taxon>Euarchontoglires</taxon>
        <taxon>Primates</taxon>
        <taxon>Haplorrhini</taxon>
        <taxon>Catarrhini</taxon>
        <taxon>Hominidae</taxon>
        <taxon>Homo</taxon>
    </lineage>
</organism>
<name>PKHF1_HUMAN</name>
<dbReference type="EMBL" id="AY037145">
    <property type="protein sequence ID" value="AAK67626.2"/>
    <property type="molecule type" value="mRNA"/>
</dbReference>
<dbReference type="EMBL" id="AF434818">
    <property type="protein sequence ID" value="AAL30773.1"/>
    <property type="molecule type" value="mRNA"/>
</dbReference>
<dbReference type="EMBL" id="AK027758">
    <property type="protein sequence ID" value="BAB55349.1"/>
    <property type="molecule type" value="mRNA"/>
</dbReference>
<dbReference type="EMBL" id="BC002744">
    <property type="protein sequence ID" value="AAH02744.1"/>
    <property type="molecule type" value="mRNA"/>
</dbReference>
<dbReference type="CCDS" id="CCDS12417.1"/>
<dbReference type="RefSeq" id="NP_077286.3">
    <property type="nucleotide sequence ID" value="NM_024310.4"/>
</dbReference>
<dbReference type="RefSeq" id="XP_011525611.1">
    <property type="nucleotide sequence ID" value="XM_011527309.4"/>
</dbReference>
<dbReference type="RefSeq" id="XP_054178109.1">
    <property type="nucleotide sequence ID" value="XM_054322134.1"/>
</dbReference>
<dbReference type="SMR" id="Q96S99"/>
<dbReference type="BioGRID" id="122574">
    <property type="interactions" value="10"/>
</dbReference>
<dbReference type="FunCoup" id="Q96S99">
    <property type="interactions" value="178"/>
</dbReference>
<dbReference type="IntAct" id="Q96S99">
    <property type="interactions" value="8"/>
</dbReference>
<dbReference type="STRING" id="9606.ENSP00000389787"/>
<dbReference type="TCDB" id="8.A.136.1.12">
    <property type="family name" value="the alpha/beta-arrestin (arrb) family"/>
</dbReference>
<dbReference type="iPTMnet" id="Q96S99"/>
<dbReference type="PhosphoSitePlus" id="Q96S99"/>
<dbReference type="BioMuta" id="PLEKHF1"/>
<dbReference type="DMDM" id="115502559"/>
<dbReference type="jPOST" id="Q96S99"/>
<dbReference type="MassIVE" id="Q96S99"/>
<dbReference type="PaxDb" id="9606-ENSP00000389787"/>
<dbReference type="PeptideAtlas" id="Q96S99"/>
<dbReference type="ProteomicsDB" id="78093"/>
<dbReference type="Pumba" id="Q96S99"/>
<dbReference type="Antibodypedia" id="15545">
    <property type="antibodies" value="125 antibodies from 21 providers"/>
</dbReference>
<dbReference type="DNASU" id="79156"/>
<dbReference type="Ensembl" id="ENST00000436066.4">
    <property type="protein sequence ID" value="ENSP00000389787.2"/>
    <property type="gene ID" value="ENSG00000166289.6"/>
</dbReference>
<dbReference type="Ensembl" id="ENST00000592810.1">
    <property type="protein sequence ID" value="ENSP00000466292.1"/>
    <property type="gene ID" value="ENSG00000166289.6"/>
</dbReference>
<dbReference type="GeneID" id="79156"/>
<dbReference type="KEGG" id="hsa:79156"/>
<dbReference type="MANE-Select" id="ENST00000436066.4">
    <property type="protein sequence ID" value="ENSP00000389787.2"/>
    <property type="RefSeq nucleotide sequence ID" value="NM_024310.5"/>
    <property type="RefSeq protein sequence ID" value="NP_077286.3"/>
</dbReference>
<dbReference type="UCSC" id="uc002nsh.5">
    <property type="organism name" value="human"/>
</dbReference>
<dbReference type="AGR" id="HGNC:20764"/>
<dbReference type="CTD" id="79156"/>
<dbReference type="DisGeNET" id="79156"/>
<dbReference type="GeneCards" id="PLEKHF1"/>
<dbReference type="HGNC" id="HGNC:20764">
    <property type="gene designation" value="PLEKHF1"/>
</dbReference>
<dbReference type="HPA" id="ENSG00000166289">
    <property type="expression patterns" value="Tissue enhanced (skeletal)"/>
</dbReference>
<dbReference type="MIM" id="615200">
    <property type="type" value="gene"/>
</dbReference>
<dbReference type="neXtProt" id="NX_Q96S99"/>
<dbReference type="OpenTargets" id="ENSG00000166289"/>
<dbReference type="PharmGKB" id="PA134928547"/>
<dbReference type="VEuPathDB" id="HostDB:ENSG00000166289"/>
<dbReference type="eggNOG" id="KOG1729">
    <property type="taxonomic scope" value="Eukaryota"/>
</dbReference>
<dbReference type="GeneTree" id="ENSGT00940000160728"/>
<dbReference type="HOGENOM" id="CLU_064864_2_0_1"/>
<dbReference type="InParanoid" id="Q96S99"/>
<dbReference type="OMA" id="MRCTHTR"/>
<dbReference type="OrthoDB" id="70570at2759"/>
<dbReference type="PAN-GO" id="Q96S99">
    <property type="GO annotations" value="7 GO annotations based on evolutionary models"/>
</dbReference>
<dbReference type="PhylomeDB" id="Q96S99"/>
<dbReference type="TreeFam" id="TF315235"/>
<dbReference type="PathwayCommons" id="Q96S99"/>
<dbReference type="SignaLink" id="Q96S99"/>
<dbReference type="BioGRID-ORCS" id="79156">
    <property type="hits" value="11 hits in 1160 CRISPR screens"/>
</dbReference>
<dbReference type="ChiTaRS" id="PLEKHF1">
    <property type="organism name" value="human"/>
</dbReference>
<dbReference type="GenomeRNAi" id="79156"/>
<dbReference type="Pharos" id="Q96S99">
    <property type="development level" value="Tbio"/>
</dbReference>
<dbReference type="PRO" id="PR:Q96S99"/>
<dbReference type="Proteomes" id="UP000005640">
    <property type="component" value="Chromosome 19"/>
</dbReference>
<dbReference type="RNAct" id="Q96S99">
    <property type="molecule type" value="protein"/>
</dbReference>
<dbReference type="Bgee" id="ENSG00000166289">
    <property type="expression patterns" value="Expressed in hindlimb stylopod muscle and 158 other cell types or tissues"/>
</dbReference>
<dbReference type="ExpressionAtlas" id="Q96S99">
    <property type="expression patterns" value="baseline and differential"/>
</dbReference>
<dbReference type="GO" id="GO:0005769">
    <property type="term" value="C:early endosome"/>
    <property type="evidence" value="ECO:0000318"/>
    <property type="project" value="GO_Central"/>
</dbReference>
<dbReference type="GO" id="GO:0010008">
    <property type="term" value="C:endosome membrane"/>
    <property type="evidence" value="ECO:0000305"/>
    <property type="project" value="BHF-UCL"/>
</dbReference>
<dbReference type="GO" id="GO:0005765">
    <property type="term" value="C:lysosomal membrane"/>
    <property type="evidence" value="ECO:0000305"/>
    <property type="project" value="BHF-UCL"/>
</dbReference>
<dbReference type="GO" id="GO:0005764">
    <property type="term" value="C:lysosome"/>
    <property type="evidence" value="ECO:0000314"/>
    <property type="project" value="BHF-UCL"/>
</dbReference>
<dbReference type="GO" id="GO:0005634">
    <property type="term" value="C:nucleus"/>
    <property type="evidence" value="ECO:0007669"/>
    <property type="project" value="UniProtKB-SubCell"/>
</dbReference>
<dbReference type="GO" id="GO:0048471">
    <property type="term" value="C:perinuclear region of cytoplasm"/>
    <property type="evidence" value="ECO:0007669"/>
    <property type="project" value="UniProtKB-SubCell"/>
</dbReference>
<dbReference type="GO" id="GO:0035091">
    <property type="term" value="F:phosphatidylinositol binding"/>
    <property type="evidence" value="ECO:0000318"/>
    <property type="project" value="GO_Central"/>
</dbReference>
<dbReference type="GO" id="GO:0032266">
    <property type="term" value="F:phosphatidylinositol-3-phosphate binding"/>
    <property type="evidence" value="ECO:0000314"/>
    <property type="project" value="BHF-UCL"/>
</dbReference>
<dbReference type="GO" id="GO:0070273">
    <property type="term" value="F:phosphatidylinositol-4-phosphate binding"/>
    <property type="evidence" value="ECO:0000314"/>
    <property type="project" value="BHF-UCL"/>
</dbReference>
<dbReference type="GO" id="GO:0010314">
    <property type="term" value="F:phosphatidylinositol-5-phosphate binding"/>
    <property type="evidence" value="ECO:0000314"/>
    <property type="project" value="BHF-UCL"/>
</dbReference>
<dbReference type="GO" id="GO:0008270">
    <property type="term" value="F:zinc ion binding"/>
    <property type="evidence" value="ECO:0007669"/>
    <property type="project" value="UniProtKB-KW"/>
</dbReference>
<dbReference type="GO" id="GO:0006915">
    <property type="term" value="P:apoptotic process"/>
    <property type="evidence" value="ECO:0007669"/>
    <property type="project" value="UniProtKB-KW"/>
</dbReference>
<dbReference type="GO" id="GO:0007032">
    <property type="term" value="P:endosome organization"/>
    <property type="evidence" value="ECO:0000315"/>
    <property type="project" value="BHF-UCL"/>
</dbReference>
<dbReference type="GO" id="GO:0008333">
    <property type="term" value="P:endosome to lysosome transport"/>
    <property type="evidence" value="ECO:0000318"/>
    <property type="project" value="GO_Central"/>
</dbReference>
<dbReference type="GO" id="GO:0010508">
    <property type="term" value="P:positive regulation of autophagy"/>
    <property type="evidence" value="ECO:0000314"/>
    <property type="project" value="BHF-UCL"/>
</dbReference>
<dbReference type="GO" id="GO:0072659">
    <property type="term" value="P:protein localization to plasma membrane"/>
    <property type="evidence" value="ECO:0000315"/>
    <property type="project" value="BHF-UCL"/>
</dbReference>
<dbReference type="GO" id="GO:0016050">
    <property type="term" value="P:vesicle organization"/>
    <property type="evidence" value="ECO:0000315"/>
    <property type="project" value="BHF-UCL"/>
</dbReference>
<dbReference type="CDD" id="cd15754">
    <property type="entry name" value="FYVE_PKHF1"/>
    <property type="match status" value="1"/>
</dbReference>
<dbReference type="CDD" id="cd01218">
    <property type="entry name" value="PH_Phafin2-like"/>
    <property type="match status" value="1"/>
</dbReference>
<dbReference type="FunFam" id="2.30.29.30:FF:000247">
    <property type="entry name" value="pleckstrin homology domain-containing family F member 1"/>
    <property type="match status" value="1"/>
</dbReference>
<dbReference type="FunFam" id="3.30.40.10:FF:000284">
    <property type="entry name" value="pleckstrin homology domain-containing family F member 1"/>
    <property type="match status" value="1"/>
</dbReference>
<dbReference type="Gene3D" id="2.30.29.30">
    <property type="entry name" value="Pleckstrin-homology domain (PH domain)/Phosphotyrosine-binding domain (PTB)"/>
    <property type="match status" value="1"/>
</dbReference>
<dbReference type="Gene3D" id="3.30.40.10">
    <property type="entry name" value="Zinc/RING finger domain, C3HC4 (zinc finger)"/>
    <property type="match status" value="1"/>
</dbReference>
<dbReference type="InterPro" id="IPR011993">
    <property type="entry name" value="PH-like_dom_sf"/>
</dbReference>
<dbReference type="InterPro" id="IPR001849">
    <property type="entry name" value="PH_domain"/>
</dbReference>
<dbReference type="InterPro" id="IPR051765">
    <property type="entry name" value="PH_domain-containing_F"/>
</dbReference>
<dbReference type="InterPro" id="IPR037871">
    <property type="entry name" value="PH_Phafin"/>
</dbReference>
<dbReference type="InterPro" id="IPR042762">
    <property type="entry name" value="PKHF1_FYVE"/>
</dbReference>
<dbReference type="InterPro" id="IPR000306">
    <property type="entry name" value="Znf_FYVE"/>
</dbReference>
<dbReference type="InterPro" id="IPR017455">
    <property type="entry name" value="Znf_FYVE-rel"/>
</dbReference>
<dbReference type="InterPro" id="IPR011011">
    <property type="entry name" value="Znf_FYVE_PHD"/>
</dbReference>
<dbReference type="InterPro" id="IPR013083">
    <property type="entry name" value="Znf_RING/FYVE/PHD"/>
</dbReference>
<dbReference type="PANTHER" id="PTHR46280:SF2">
    <property type="entry name" value="PLECKSTRIN HOMOLOGY DOMAIN-CONTAINING FAMILY F MEMBER 1"/>
    <property type="match status" value="1"/>
</dbReference>
<dbReference type="PANTHER" id="PTHR46280">
    <property type="entry name" value="PLECKSTRIN HOMOLOGY DOMAIN-CONTAINING FAMILY F MEMBER 2-RELATED"/>
    <property type="match status" value="1"/>
</dbReference>
<dbReference type="Pfam" id="PF01363">
    <property type="entry name" value="FYVE"/>
    <property type="match status" value="1"/>
</dbReference>
<dbReference type="Pfam" id="PF00169">
    <property type="entry name" value="PH"/>
    <property type="match status" value="1"/>
</dbReference>
<dbReference type="SMART" id="SM00064">
    <property type="entry name" value="FYVE"/>
    <property type="match status" value="1"/>
</dbReference>
<dbReference type="SMART" id="SM00233">
    <property type="entry name" value="PH"/>
    <property type="match status" value="1"/>
</dbReference>
<dbReference type="SUPFAM" id="SSF57903">
    <property type="entry name" value="FYVE/PHD zinc finger"/>
    <property type="match status" value="1"/>
</dbReference>
<dbReference type="SUPFAM" id="SSF50729">
    <property type="entry name" value="PH domain-like"/>
    <property type="match status" value="1"/>
</dbReference>
<dbReference type="PROSITE" id="PS50003">
    <property type="entry name" value="PH_DOMAIN"/>
    <property type="match status" value="1"/>
</dbReference>
<dbReference type="PROSITE" id="PS50178">
    <property type="entry name" value="ZF_FYVE"/>
    <property type="match status" value="1"/>
</dbReference>
<feature type="chain" id="PRO_0000251597" description="Pleckstrin homology domain-containing family F member 1">
    <location>
        <begin position="1"/>
        <end position="279"/>
    </location>
</feature>
<feature type="domain" description="PH" evidence="2">
    <location>
        <begin position="35"/>
        <end position="131"/>
    </location>
</feature>
<feature type="zinc finger region" description="FYVE-type" evidence="1">
    <location>
        <begin position="152"/>
        <end position="212"/>
    </location>
</feature>
<feature type="region of interest" description="Disordered" evidence="3">
    <location>
        <begin position="218"/>
        <end position="264"/>
    </location>
</feature>
<feature type="compositionally biased region" description="Acidic residues" evidence="3">
    <location>
        <begin position="244"/>
        <end position="253"/>
    </location>
</feature>
<feature type="binding site" evidence="1">
    <location>
        <position position="158"/>
    </location>
    <ligand>
        <name>Zn(2+)</name>
        <dbReference type="ChEBI" id="CHEBI:29105"/>
        <label>1</label>
    </ligand>
</feature>
<feature type="binding site" evidence="1">
    <location>
        <position position="161"/>
    </location>
    <ligand>
        <name>Zn(2+)</name>
        <dbReference type="ChEBI" id="CHEBI:29105"/>
        <label>1</label>
    </ligand>
</feature>
<feature type="binding site" evidence="1">
    <location>
        <position position="175"/>
    </location>
    <ligand>
        <name>Zn(2+)</name>
        <dbReference type="ChEBI" id="CHEBI:29105"/>
        <label>2</label>
    </ligand>
</feature>
<feature type="binding site" evidence="1">
    <location>
        <position position="178"/>
    </location>
    <ligand>
        <name>Zn(2+)</name>
        <dbReference type="ChEBI" id="CHEBI:29105"/>
        <label>2</label>
    </ligand>
</feature>
<feature type="binding site" evidence="1">
    <location>
        <position position="183"/>
    </location>
    <ligand>
        <name>Zn(2+)</name>
        <dbReference type="ChEBI" id="CHEBI:29105"/>
        <label>1</label>
    </ligand>
</feature>
<feature type="binding site" evidence="1">
    <location>
        <position position="186"/>
    </location>
    <ligand>
        <name>Zn(2+)</name>
        <dbReference type="ChEBI" id="CHEBI:29105"/>
        <label>1</label>
    </ligand>
</feature>
<feature type="binding site" evidence="1">
    <location>
        <position position="204"/>
    </location>
    <ligand>
        <name>Zn(2+)</name>
        <dbReference type="ChEBI" id="CHEBI:29105"/>
        <label>2</label>
    </ligand>
</feature>
<feature type="binding site" evidence="1">
    <location>
        <position position="207"/>
    </location>
    <ligand>
        <name>Zn(2+)</name>
        <dbReference type="ChEBI" id="CHEBI:29105"/>
        <label>2</label>
    </ligand>
</feature>
<feature type="sequence conflict" description="In Ref. 2; AAL30773 and 3; BAB55349." evidence="5" ref="2 3">
    <original>F</original>
    <variation>L</variation>
    <location>
        <position position="55"/>
    </location>
</feature>
<feature type="sequence conflict" description="In Ref. 1; AAK67626." evidence="5" ref="1">
    <original>R</original>
    <variation>K</variation>
    <location>
        <position position="135"/>
    </location>
</feature>
<feature type="sequence conflict" description="In Ref. 1; AAK67626." evidence="5" ref="1">
    <original>G</original>
    <variation>R</variation>
    <location>
        <position position="229"/>
    </location>
</feature>
<gene>
    <name type="primary">PLEKHF1</name>
    <name type="synonym">APPD</name>
    <name type="synonym">LAPF</name>
    <name type="synonym">ZFYVE15</name>
</gene>
<accession>Q96S99</accession>
<accession>Q96K11</accession>
<accession>Q9BUB9</accession>
<sequence>MVDHLANTEINSQRIAAVESCFGASGQPLALPGRVLLGEGVLTKECRKKAKPRIFFLFNDILVYGSIVLNKRKYRSQHIIPLEEVTLELLPETLQAKNRWMIKTAKKSFVVSAASATERQEWISHIEECVRRQLRATGRPPSTEHAAPWIPDKATDICMRCTQTRFSALTRRHHCRKCGFVVCAECSRQRFLLPRLSPKPVRVCSLCYRELAAQQRQEEAEEQGAGSPGQPAHLARPICGASSGDDDDSDEDKEGSRDGDWPSSVEFYASGVAWSAFHS</sequence>
<keyword id="KW-0053">Apoptosis</keyword>
<keyword id="KW-0963">Cytoplasm</keyword>
<keyword id="KW-0458">Lysosome</keyword>
<keyword id="KW-0479">Metal-binding</keyword>
<keyword id="KW-0539">Nucleus</keyword>
<keyword id="KW-1267">Proteomics identification</keyword>
<keyword id="KW-1185">Reference proteome</keyword>
<keyword id="KW-0862">Zinc</keyword>
<keyword id="KW-0863">Zinc-finger</keyword>
<reference key="1">
    <citation type="journal article" date="2005" name="J. Biol. Chem.">
        <title>The lysosome-associated apoptosis-inducing protein containing the pleckstrin homology (PH) and FYVE domains (LAPF), representative of a novel family of PH and FYVE domain-containing proteins, induces caspase-independent apoptosis via the lysosomal-mitochondrial pathway.</title>
        <authorList>
            <person name="Chen W."/>
            <person name="Li N."/>
            <person name="Chen T."/>
            <person name="Han Y."/>
            <person name="Li C."/>
            <person name="Wang Y."/>
            <person name="He W."/>
            <person name="Zhang L."/>
            <person name="Wan T."/>
            <person name="Cao X."/>
        </authorList>
    </citation>
    <scope>NUCLEOTIDE SEQUENCE [MRNA]</scope>
    <scope>FUNCTION</scope>
    <scope>SUBCELLULAR LOCATION</scope>
    <scope>TISSUE SPECIFICITY</scope>
</reference>
<reference key="2">
    <citation type="submission" date="2001-10" db="EMBL/GenBank/DDBJ databases">
        <title>Phafin 1, PH and FYVE domain-containing protein 1.</title>
        <authorList>
            <person name="Shi H."/>
            <person name="Hong W."/>
        </authorList>
    </citation>
    <scope>NUCLEOTIDE SEQUENCE [MRNA]</scope>
</reference>
<reference key="3">
    <citation type="journal article" date="2004" name="Nat. Genet.">
        <title>Complete sequencing and characterization of 21,243 full-length human cDNAs.</title>
        <authorList>
            <person name="Ota T."/>
            <person name="Suzuki Y."/>
            <person name="Nishikawa T."/>
            <person name="Otsuki T."/>
            <person name="Sugiyama T."/>
            <person name="Irie R."/>
            <person name="Wakamatsu A."/>
            <person name="Hayashi K."/>
            <person name="Sato H."/>
            <person name="Nagai K."/>
            <person name="Kimura K."/>
            <person name="Makita H."/>
            <person name="Sekine M."/>
            <person name="Obayashi M."/>
            <person name="Nishi T."/>
            <person name="Shibahara T."/>
            <person name="Tanaka T."/>
            <person name="Ishii S."/>
            <person name="Yamamoto J."/>
            <person name="Saito K."/>
            <person name="Kawai Y."/>
            <person name="Isono Y."/>
            <person name="Nakamura Y."/>
            <person name="Nagahari K."/>
            <person name="Murakami K."/>
            <person name="Yasuda T."/>
            <person name="Iwayanagi T."/>
            <person name="Wagatsuma M."/>
            <person name="Shiratori A."/>
            <person name="Sudo H."/>
            <person name="Hosoiri T."/>
            <person name="Kaku Y."/>
            <person name="Kodaira H."/>
            <person name="Kondo H."/>
            <person name="Sugawara M."/>
            <person name="Takahashi M."/>
            <person name="Kanda K."/>
            <person name="Yokoi T."/>
            <person name="Furuya T."/>
            <person name="Kikkawa E."/>
            <person name="Omura Y."/>
            <person name="Abe K."/>
            <person name="Kamihara K."/>
            <person name="Katsuta N."/>
            <person name="Sato K."/>
            <person name="Tanikawa M."/>
            <person name="Yamazaki M."/>
            <person name="Ninomiya K."/>
            <person name="Ishibashi T."/>
            <person name="Yamashita H."/>
            <person name="Murakawa K."/>
            <person name="Fujimori K."/>
            <person name="Tanai H."/>
            <person name="Kimata M."/>
            <person name="Watanabe M."/>
            <person name="Hiraoka S."/>
            <person name="Chiba Y."/>
            <person name="Ishida S."/>
            <person name="Ono Y."/>
            <person name="Takiguchi S."/>
            <person name="Watanabe S."/>
            <person name="Yosida M."/>
            <person name="Hotuta T."/>
            <person name="Kusano J."/>
            <person name="Kanehori K."/>
            <person name="Takahashi-Fujii A."/>
            <person name="Hara H."/>
            <person name="Tanase T.-O."/>
            <person name="Nomura Y."/>
            <person name="Togiya S."/>
            <person name="Komai F."/>
            <person name="Hara R."/>
            <person name="Takeuchi K."/>
            <person name="Arita M."/>
            <person name="Imose N."/>
            <person name="Musashino K."/>
            <person name="Yuuki H."/>
            <person name="Oshima A."/>
            <person name="Sasaki N."/>
            <person name="Aotsuka S."/>
            <person name="Yoshikawa Y."/>
            <person name="Matsunawa H."/>
            <person name="Ichihara T."/>
            <person name="Shiohata N."/>
            <person name="Sano S."/>
            <person name="Moriya S."/>
            <person name="Momiyama H."/>
            <person name="Satoh N."/>
            <person name="Takami S."/>
            <person name="Terashima Y."/>
            <person name="Suzuki O."/>
            <person name="Nakagawa S."/>
            <person name="Senoh A."/>
            <person name="Mizoguchi H."/>
            <person name="Goto Y."/>
            <person name="Shimizu F."/>
            <person name="Wakebe H."/>
            <person name="Hishigaki H."/>
            <person name="Watanabe T."/>
            <person name="Sugiyama A."/>
            <person name="Takemoto M."/>
            <person name="Kawakami B."/>
            <person name="Yamazaki M."/>
            <person name="Watanabe K."/>
            <person name="Kumagai A."/>
            <person name="Itakura S."/>
            <person name="Fukuzumi Y."/>
            <person name="Fujimori Y."/>
            <person name="Komiyama M."/>
            <person name="Tashiro H."/>
            <person name="Tanigami A."/>
            <person name="Fujiwara T."/>
            <person name="Ono T."/>
            <person name="Yamada K."/>
            <person name="Fujii Y."/>
            <person name="Ozaki K."/>
            <person name="Hirao M."/>
            <person name="Ohmori Y."/>
            <person name="Kawabata A."/>
            <person name="Hikiji T."/>
            <person name="Kobatake N."/>
            <person name="Inagaki H."/>
            <person name="Ikema Y."/>
            <person name="Okamoto S."/>
            <person name="Okitani R."/>
            <person name="Kawakami T."/>
            <person name="Noguchi S."/>
            <person name="Itoh T."/>
            <person name="Shigeta K."/>
            <person name="Senba T."/>
            <person name="Matsumura K."/>
            <person name="Nakajima Y."/>
            <person name="Mizuno T."/>
            <person name="Morinaga M."/>
            <person name="Sasaki M."/>
            <person name="Togashi T."/>
            <person name="Oyama M."/>
            <person name="Hata H."/>
            <person name="Watanabe M."/>
            <person name="Komatsu T."/>
            <person name="Mizushima-Sugano J."/>
            <person name="Satoh T."/>
            <person name="Shirai Y."/>
            <person name="Takahashi Y."/>
            <person name="Nakagawa K."/>
            <person name="Okumura K."/>
            <person name="Nagase T."/>
            <person name="Nomura N."/>
            <person name="Kikuchi H."/>
            <person name="Masuho Y."/>
            <person name="Yamashita R."/>
            <person name="Nakai K."/>
            <person name="Yada T."/>
            <person name="Nakamura Y."/>
            <person name="Ohara O."/>
            <person name="Isogai T."/>
            <person name="Sugano S."/>
        </authorList>
    </citation>
    <scope>NUCLEOTIDE SEQUENCE [LARGE SCALE MRNA]</scope>
    <source>
        <tissue>Placenta</tissue>
    </source>
</reference>
<reference key="4">
    <citation type="journal article" date="2004" name="Genome Res.">
        <title>The status, quality, and expansion of the NIH full-length cDNA project: the Mammalian Gene Collection (MGC).</title>
        <authorList>
            <consortium name="The MGC Project Team"/>
        </authorList>
    </citation>
    <scope>NUCLEOTIDE SEQUENCE [LARGE SCALE MRNA]</scope>
    <source>
        <tissue>Brain</tissue>
    </source>
</reference>
<comment type="function">
    <text evidence="4">May induce apoptosis through the lysosomal-mitochondrial pathway. Translocates to the lysosome initiating the permeabilization of lysosomal membrane (LMP) and resulting in the release of CTSD and CTSL to the cytoplasm. Triggers the caspase-independent apoptosis by altering mitochondrial membrane permeabilization (MMP) resulting in the release of PDCD8.</text>
</comment>
<comment type="interaction">
    <interactant intactId="EBI-745767">
        <id>Q96S99</id>
    </interactant>
    <interactant intactId="EBI-742141">
        <id>O95810</id>
        <label>CAVIN2</label>
    </interactant>
    <organismsDiffer>false</organismsDiffer>
    <experiments>3</experiments>
</comment>
<comment type="interaction">
    <interactant intactId="EBI-745767">
        <id>Q96S99</id>
    </interactant>
    <interactant intactId="EBI-741528">
        <id>Q9UKJ5</id>
        <label>CHIC2</label>
    </interactant>
    <organismsDiffer>false</organismsDiffer>
    <experiments>3</experiments>
</comment>
<comment type="interaction">
    <interactant intactId="EBI-745767">
        <id>Q96S99</id>
    </interactant>
    <interactant intactId="EBI-2686809">
        <id>Q96JM7</id>
        <label>L3MBTL3</label>
    </interactant>
    <organismsDiffer>false</organismsDiffer>
    <experiments>3</experiments>
</comment>
<comment type="interaction">
    <interactant intactId="EBI-745767">
        <id>Q96S99</id>
    </interactant>
    <interactant intactId="EBI-11985629">
        <id>Q96JM7-2</id>
        <label>L3MBTL3</label>
    </interactant>
    <organismsDiffer>false</organismsDiffer>
    <experiments>3</experiments>
</comment>
<comment type="interaction">
    <interactant intactId="EBI-745767">
        <id>Q96S99</id>
    </interactant>
    <interactant intactId="EBI-12193061">
        <id>Q86SE8-2</id>
        <label>NPM2</label>
    </interactant>
    <organismsDiffer>false</organismsDiffer>
    <experiments>3</experiments>
</comment>
<comment type="interaction">
    <interactant intactId="EBI-745767">
        <id>Q96S99</id>
    </interactant>
    <interactant intactId="EBI-1049336">
        <id>O95379</id>
        <label>TNFAIP8</label>
    </interactant>
    <organismsDiffer>false</organismsDiffer>
    <experiments>3</experiments>
</comment>
<comment type="subcellular location">
    <subcellularLocation>
        <location evidence="4">Nucleus</location>
    </subcellularLocation>
    <subcellularLocation>
        <location evidence="4">Cytoplasm</location>
        <location evidence="4">Perinuclear region</location>
    </subcellularLocation>
    <subcellularLocation>
        <location evidence="4">Lysosome</location>
    </subcellularLocation>
    <text>Translocates to lysosome during apoptosis.</text>
</comment>
<comment type="tissue specificity">
    <text evidence="4">Highly expressed in heart and skeletal muscle. Weakly expressed in brain, thymus, spleen, kidney, liver, small intestine, placenta and lung.</text>
</comment>
<comment type="domain">
    <text>PH and FYVE-type zinc finger domains are required for lysosomal location.</text>
</comment>
<evidence type="ECO:0000255" key="1">
    <source>
        <dbReference type="PROSITE-ProRule" id="PRU00091"/>
    </source>
</evidence>
<evidence type="ECO:0000255" key="2">
    <source>
        <dbReference type="PROSITE-ProRule" id="PRU00145"/>
    </source>
</evidence>
<evidence type="ECO:0000256" key="3">
    <source>
        <dbReference type="SAM" id="MobiDB-lite"/>
    </source>
</evidence>
<evidence type="ECO:0000269" key="4">
    <source>
    </source>
</evidence>
<evidence type="ECO:0000305" key="5"/>